<feature type="chain" id="PRO_0000173896" description="DNA repair protein RAD59">
    <location>
        <begin position="1"/>
        <end position="209"/>
    </location>
</feature>
<keyword id="KW-0227">DNA damage</keyword>
<keyword id="KW-0233">DNA recombination</keyword>
<keyword id="KW-0234">DNA repair</keyword>
<keyword id="KW-0539">Nucleus</keyword>
<keyword id="KW-1185">Reference proteome</keyword>
<reference key="1">
    <citation type="journal article" date="2001" name="Curr. Genet.">
        <title>Identification and characterization of the RAD59 homolog of Kluyveromyces lactis.</title>
        <authorList>
            <person name="van den Bosch M."/>
            <person name="Zonneveld J.B.M."/>
            <person name="Lohman P.H.M."/>
            <person name="Pastink A."/>
        </authorList>
    </citation>
    <scope>NUCLEOTIDE SEQUENCE [GENOMIC DNA]</scope>
</reference>
<reference key="2">
    <citation type="journal article" date="2004" name="Nature">
        <title>Genome evolution in yeasts.</title>
        <authorList>
            <person name="Dujon B."/>
            <person name="Sherman D."/>
            <person name="Fischer G."/>
            <person name="Durrens P."/>
            <person name="Casaregola S."/>
            <person name="Lafontaine I."/>
            <person name="de Montigny J."/>
            <person name="Marck C."/>
            <person name="Neuveglise C."/>
            <person name="Talla E."/>
            <person name="Goffard N."/>
            <person name="Frangeul L."/>
            <person name="Aigle M."/>
            <person name="Anthouard V."/>
            <person name="Babour A."/>
            <person name="Barbe V."/>
            <person name="Barnay S."/>
            <person name="Blanchin S."/>
            <person name="Beckerich J.-M."/>
            <person name="Beyne E."/>
            <person name="Bleykasten C."/>
            <person name="Boisrame A."/>
            <person name="Boyer J."/>
            <person name="Cattolico L."/>
            <person name="Confanioleri F."/>
            <person name="de Daruvar A."/>
            <person name="Despons L."/>
            <person name="Fabre E."/>
            <person name="Fairhead C."/>
            <person name="Ferry-Dumazet H."/>
            <person name="Groppi A."/>
            <person name="Hantraye F."/>
            <person name="Hennequin C."/>
            <person name="Jauniaux N."/>
            <person name="Joyet P."/>
            <person name="Kachouri R."/>
            <person name="Kerrest A."/>
            <person name="Koszul R."/>
            <person name="Lemaire M."/>
            <person name="Lesur I."/>
            <person name="Ma L."/>
            <person name="Muller H."/>
            <person name="Nicaud J.-M."/>
            <person name="Nikolski M."/>
            <person name="Oztas S."/>
            <person name="Ozier-Kalogeropoulos O."/>
            <person name="Pellenz S."/>
            <person name="Potier S."/>
            <person name="Richard G.-F."/>
            <person name="Straub M.-L."/>
            <person name="Suleau A."/>
            <person name="Swennen D."/>
            <person name="Tekaia F."/>
            <person name="Wesolowski-Louvel M."/>
            <person name="Westhof E."/>
            <person name="Wirth B."/>
            <person name="Zeniou-Meyer M."/>
            <person name="Zivanovic Y."/>
            <person name="Bolotin-Fukuhara M."/>
            <person name="Thierry A."/>
            <person name="Bouchier C."/>
            <person name="Caudron B."/>
            <person name="Scarpelli C."/>
            <person name="Gaillardin C."/>
            <person name="Weissenbach J."/>
            <person name="Wincker P."/>
            <person name="Souciet J.-L."/>
        </authorList>
    </citation>
    <scope>NUCLEOTIDE SEQUENCE [LARGE SCALE GENOMIC DNA]</scope>
    <source>
        <strain>ATCC 8585 / CBS 2359 / DSM 70799 / NBRC 1267 / NRRL Y-1140 / WM37</strain>
    </source>
</reference>
<name>RAD59_KLULA</name>
<gene>
    <name type="primary">RAD59</name>
    <name type="ordered locus">KLLA0E05203g</name>
</gene>
<comment type="function">
    <text evidence="1">Involved in the repair of double-strand breaks in DNA during vegetative growth via recombination and single-strand annealing. Anneals complementary single-stranded DNA (By similarity).</text>
</comment>
<comment type="subunit">
    <text evidence="1">Interacts with RAD51 and RAD52.</text>
</comment>
<comment type="subcellular location">
    <subcellularLocation>
        <location evidence="1">Nucleus</location>
    </subcellularLocation>
</comment>
<comment type="similarity">
    <text evidence="2">Belongs to the RAD52 family.</text>
</comment>
<sequence length="209" mass="23859">MSRYTDISYEGTSYTVNTGLDIKDFQIEEDWYNRPASEWSVKRIGQLQGKVEQYTYRIYHSNKYGKHNLARLIPGHVLISFANECFGYDGWSSEVEEITSLEHTENAASEDKRESHTVLAEARVKLVLKDDTYTFAGGFGKSTMPFKGEAFAKAKKEAITDALKNCLLGFEKVILDHEIKIKQNYYVDGVFKAEMSKIEGKTSIPRTVR</sequence>
<accession>Q9HEU2</accession>
<accession>Q6CPF7</accession>
<proteinExistence type="inferred from homology"/>
<organism>
    <name type="scientific">Kluyveromyces lactis (strain ATCC 8585 / CBS 2359 / DSM 70799 / NBRC 1267 / NRRL Y-1140 / WM37)</name>
    <name type="common">Yeast</name>
    <name type="synonym">Candida sphaerica</name>
    <dbReference type="NCBI Taxonomy" id="284590"/>
    <lineage>
        <taxon>Eukaryota</taxon>
        <taxon>Fungi</taxon>
        <taxon>Dikarya</taxon>
        <taxon>Ascomycota</taxon>
        <taxon>Saccharomycotina</taxon>
        <taxon>Saccharomycetes</taxon>
        <taxon>Saccharomycetales</taxon>
        <taxon>Saccharomycetaceae</taxon>
        <taxon>Kluyveromyces</taxon>
    </lineage>
</organism>
<protein>
    <recommendedName>
        <fullName>DNA repair protein RAD59</fullName>
    </recommendedName>
</protein>
<evidence type="ECO:0000250" key="1"/>
<evidence type="ECO:0000305" key="2"/>
<dbReference type="EMBL" id="AF324456">
    <property type="protein sequence ID" value="AAG45224.1"/>
    <property type="molecule type" value="Genomic_DNA"/>
</dbReference>
<dbReference type="EMBL" id="CR382125">
    <property type="protein sequence ID" value="CAG99269.1"/>
    <property type="molecule type" value="Genomic_DNA"/>
</dbReference>
<dbReference type="RefSeq" id="XP_454182.1">
    <property type="nucleotide sequence ID" value="XM_454182.1"/>
</dbReference>
<dbReference type="SMR" id="Q9HEU2"/>
<dbReference type="FunCoup" id="Q9HEU2">
    <property type="interactions" value="140"/>
</dbReference>
<dbReference type="STRING" id="284590.Q9HEU2"/>
<dbReference type="PaxDb" id="284590-Q9HEU2"/>
<dbReference type="KEGG" id="kla:KLLA0_E05259g"/>
<dbReference type="eggNOG" id="KOG4141">
    <property type="taxonomic scope" value="Eukaryota"/>
</dbReference>
<dbReference type="HOGENOM" id="CLU_091426_0_0_1"/>
<dbReference type="InParanoid" id="Q9HEU2"/>
<dbReference type="OMA" id="WSVQRIG"/>
<dbReference type="Proteomes" id="UP000000598">
    <property type="component" value="Chromosome E"/>
</dbReference>
<dbReference type="GO" id="GO:0005634">
    <property type="term" value="C:nucleus"/>
    <property type="evidence" value="ECO:0007669"/>
    <property type="project" value="UniProtKB-SubCell"/>
</dbReference>
<dbReference type="GO" id="GO:0000724">
    <property type="term" value="P:double-strand break repair via homologous recombination"/>
    <property type="evidence" value="ECO:0007669"/>
    <property type="project" value="TreeGrafter"/>
</dbReference>
<dbReference type="GO" id="GO:0045002">
    <property type="term" value="P:double-strand break repair via single-strand annealing"/>
    <property type="evidence" value="ECO:0007669"/>
    <property type="project" value="InterPro"/>
</dbReference>
<dbReference type="GO" id="GO:0006312">
    <property type="term" value="P:mitotic recombination"/>
    <property type="evidence" value="ECO:0007669"/>
    <property type="project" value="TreeGrafter"/>
</dbReference>
<dbReference type="Gene3D" id="3.30.390.80">
    <property type="entry name" value="DNA repair protein Rad52/59/22"/>
    <property type="match status" value="1"/>
</dbReference>
<dbReference type="InterPro" id="IPR041247">
    <property type="entry name" value="Rad52_fam"/>
</dbReference>
<dbReference type="InterPro" id="IPR007232">
    <property type="entry name" value="Rad52_Rad59_Rad22"/>
</dbReference>
<dbReference type="InterPro" id="IPR042525">
    <property type="entry name" value="Rad52_Rad59_Rad22_sf"/>
</dbReference>
<dbReference type="InterPro" id="IPR016810">
    <property type="entry name" value="Rad59"/>
</dbReference>
<dbReference type="PANTHER" id="PTHR12132">
    <property type="entry name" value="DNA REPAIR AND RECOMBINATION PROTEIN RAD52, RAD59"/>
    <property type="match status" value="1"/>
</dbReference>
<dbReference type="PANTHER" id="PTHR12132:SF2">
    <property type="entry name" value="DNA REPAIR PROTEIN RAD59"/>
    <property type="match status" value="1"/>
</dbReference>
<dbReference type="Pfam" id="PF04098">
    <property type="entry name" value="Rad52_Rad22"/>
    <property type="match status" value="1"/>
</dbReference>
<dbReference type="PIRSF" id="PIRSF022936">
    <property type="entry name" value="RAD59_fungi"/>
    <property type="match status" value="1"/>
</dbReference>
<dbReference type="SUPFAM" id="SSF54768">
    <property type="entry name" value="dsRNA-binding domain-like"/>
    <property type="match status" value="1"/>
</dbReference>